<reference key="1">
    <citation type="journal article" date="2003" name="Genome Res.">
        <title>Comparative genome analysis of Vibrio vulnificus, a marine pathogen.</title>
        <authorList>
            <person name="Chen C.-Y."/>
            <person name="Wu K.-M."/>
            <person name="Chang Y.-C."/>
            <person name="Chang C.-H."/>
            <person name="Tsai H.-C."/>
            <person name="Liao T.-L."/>
            <person name="Liu Y.-M."/>
            <person name="Chen H.-J."/>
            <person name="Shen A.B.-T."/>
            <person name="Li J.-C."/>
            <person name="Su T.-L."/>
            <person name="Shao C.-P."/>
            <person name="Lee C.-T."/>
            <person name="Hor L.-I."/>
            <person name="Tsai S.-F."/>
        </authorList>
    </citation>
    <scope>NUCLEOTIDE SEQUENCE [LARGE SCALE GENOMIC DNA]</scope>
    <source>
        <strain>YJ016</strain>
    </source>
</reference>
<protein>
    <recommendedName>
        <fullName evidence="1">tRNA dimethylallyltransferase</fullName>
        <ecNumber evidence="1">2.5.1.75</ecNumber>
    </recommendedName>
    <alternativeName>
        <fullName evidence="1">Dimethylallyl diphosphate:tRNA dimethylallyltransferase</fullName>
        <shortName evidence="1">DMAPP:tRNA dimethylallyltransferase</shortName>
        <shortName evidence="1">DMATase</shortName>
    </alternativeName>
    <alternativeName>
        <fullName evidence="1">Isopentenyl-diphosphate:tRNA isopentenyltransferase</fullName>
        <shortName evidence="1">IPP transferase</shortName>
        <shortName evidence="1">IPPT</shortName>
        <shortName evidence="1">IPTase</shortName>
    </alternativeName>
</protein>
<sequence>MTEQLPLALFLMGPTASGKTELAIRLRQRYPVELISVDSALIYKGMDIGTAKPDEREQQLAPHRLIDILDPTEAYSAADFRRDALAAMNEIVVQGKIPLLVGGTMLYFKALLEGLSPLPAANAEIRQQIEQEALTKGWSVLHDELQEIDPVSAARIHPNDPQRLSRALEVYRISGKTLTELTETKGESLPFRVKQFAIAPKERAELHRRIELRFDKMMEAGFEQEMRALYTRKDLHPDLPSIRCVGYRQMWDYLDGNCTLDEAIYRGICATRQLAKRQITWLRSWDNLTWLDSENIEQSLETLSEAIASDRDSCV</sequence>
<feature type="chain" id="PRO_0000164005" description="tRNA dimethylallyltransferase">
    <location>
        <begin position="1"/>
        <end position="315"/>
    </location>
</feature>
<feature type="region of interest" description="Interaction with substrate tRNA" evidence="1">
    <location>
        <begin position="38"/>
        <end position="41"/>
    </location>
</feature>
<feature type="region of interest" description="Interaction with substrate tRNA" evidence="1">
    <location>
        <begin position="162"/>
        <end position="166"/>
    </location>
</feature>
<feature type="region of interest" description="Interaction with substrate tRNA" evidence="1">
    <location>
        <begin position="243"/>
        <end position="248"/>
    </location>
</feature>
<feature type="region of interest" description="Interaction with substrate tRNA" evidence="1">
    <location>
        <begin position="276"/>
        <end position="283"/>
    </location>
</feature>
<feature type="binding site" evidence="1">
    <location>
        <begin position="13"/>
        <end position="20"/>
    </location>
    <ligand>
        <name>ATP</name>
        <dbReference type="ChEBI" id="CHEBI:30616"/>
    </ligand>
</feature>
<feature type="binding site" evidence="1">
    <location>
        <begin position="15"/>
        <end position="20"/>
    </location>
    <ligand>
        <name>substrate</name>
    </ligand>
</feature>
<feature type="site" description="Interaction with substrate tRNA" evidence="1">
    <location>
        <position position="104"/>
    </location>
</feature>
<feature type="site" description="Interaction with substrate tRNA" evidence="1">
    <location>
        <position position="126"/>
    </location>
</feature>
<evidence type="ECO:0000255" key="1">
    <source>
        <dbReference type="HAMAP-Rule" id="MF_00185"/>
    </source>
</evidence>
<keyword id="KW-0067">ATP-binding</keyword>
<keyword id="KW-0460">Magnesium</keyword>
<keyword id="KW-0547">Nucleotide-binding</keyword>
<keyword id="KW-0808">Transferase</keyword>
<keyword id="KW-0819">tRNA processing</keyword>
<proteinExistence type="inferred from homology"/>
<accession>Q7M7I8</accession>
<gene>
    <name evidence="1" type="primary">miaA</name>
    <name type="ordered locus">VV3072</name>
</gene>
<comment type="function">
    <text evidence="1">Catalyzes the transfer of a dimethylallyl group onto the adenine at position 37 in tRNAs that read codons beginning with uridine, leading to the formation of N6-(dimethylallyl)adenosine (i(6)A).</text>
</comment>
<comment type="catalytic activity">
    <reaction evidence="1">
        <text>adenosine(37) in tRNA + dimethylallyl diphosphate = N(6)-dimethylallyladenosine(37) in tRNA + diphosphate</text>
        <dbReference type="Rhea" id="RHEA:26482"/>
        <dbReference type="Rhea" id="RHEA-COMP:10162"/>
        <dbReference type="Rhea" id="RHEA-COMP:10375"/>
        <dbReference type="ChEBI" id="CHEBI:33019"/>
        <dbReference type="ChEBI" id="CHEBI:57623"/>
        <dbReference type="ChEBI" id="CHEBI:74411"/>
        <dbReference type="ChEBI" id="CHEBI:74415"/>
        <dbReference type="EC" id="2.5.1.75"/>
    </reaction>
</comment>
<comment type="cofactor">
    <cofactor evidence="1">
        <name>Mg(2+)</name>
        <dbReference type="ChEBI" id="CHEBI:18420"/>
    </cofactor>
</comment>
<comment type="subunit">
    <text evidence="1">Monomer.</text>
</comment>
<comment type="similarity">
    <text evidence="1">Belongs to the IPP transferase family.</text>
</comment>
<dbReference type="EC" id="2.5.1.75" evidence="1"/>
<dbReference type="EMBL" id="BA000037">
    <property type="protein sequence ID" value="BAC95836.1"/>
    <property type="molecule type" value="Genomic_DNA"/>
</dbReference>
<dbReference type="RefSeq" id="WP_011151328.1">
    <property type="nucleotide sequence ID" value="NC_005139.1"/>
</dbReference>
<dbReference type="SMR" id="Q7M7I8"/>
<dbReference type="STRING" id="672.VV93_v1c28000"/>
<dbReference type="KEGG" id="vvy:VV3072"/>
<dbReference type="PATRIC" id="fig|196600.6.peg.3049"/>
<dbReference type="eggNOG" id="COG0324">
    <property type="taxonomic scope" value="Bacteria"/>
</dbReference>
<dbReference type="HOGENOM" id="CLU_032616_0_0_6"/>
<dbReference type="Proteomes" id="UP000002675">
    <property type="component" value="Chromosome I"/>
</dbReference>
<dbReference type="GO" id="GO:0005524">
    <property type="term" value="F:ATP binding"/>
    <property type="evidence" value="ECO:0007669"/>
    <property type="project" value="UniProtKB-UniRule"/>
</dbReference>
<dbReference type="GO" id="GO:0052381">
    <property type="term" value="F:tRNA dimethylallyltransferase activity"/>
    <property type="evidence" value="ECO:0007669"/>
    <property type="project" value="UniProtKB-UniRule"/>
</dbReference>
<dbReference type="GO" id="GO:0006400">
    <property type="term" value="P:tRNA modification"/>
    <property type="evidence" value="ECO:0007669"/>
    <property type="project" value="TreeGrafter"/>
</dbReference>
<dbReference type="FunFam" id="1.10.20.140:FF:000001">
    <property type="entry name" value="tRNA dimethylallyltransferase"/>
    <property type="match status" value="1"/>
</dbReference>
<dbReference type="Gene3D" id="1.10.20.140">
    <property type="match status" value="1"/>
</dbReference>
<dbReference type="Gene3D" id="3.40.50.300">
    <property type="entry name" value="P-loop containing nucleotide triphosphate hydrolases"/>
    <property type="match status" value="1"/>
</dbReference>
<dbReference type="HAMAP" id="MF_00185">
    <property type="entry name" value="IPP_trans"/>
    <property type="match status" value="1"/>
</dbReference>
<dbReference type="InterPro" id="IPR039657">
    <property type="entry name" value="Dimethylallyltransferase"/>
</dbReference>
<dbReference type="InterPro" id="IPR018022">
    <property type="entry name" value="IPT"/>
</dbReference>
<dbReference type="InterPro" id="IPR027417">
    <property type="entry name" value="P-loop_NTPase"/>
</dbReference>
<dbReference type="NCBIfam" id="TIGR00174">
    <property type="entry name" value="miaA"/>
    <property type="match status" value="1"/>
</dbReference>
<dbReference type="PANTHER" id="PTHR11088">
    <property type="entry name" value="TRNA DIMETHYLALLYLTRANSFERASE"/>
    <property type="match status" value="1"/>
</dbReference>
<dbReference type="PANTHER" id="PTHR11088:SF60">
    <property type="entry name" value="TRNA DIMETHYLALLYLTRANSFERASE"/>
    <property type="match status" value="1"/>
</dbReference>
<dbReference type="Pfam" id="PF01715">
    <property type="entry name" value="IPPT"/>
    <property type="match status" value="1"/>
</dbReference>
<dbReference type="SUPFAM" id="SSF52540">
    <property type="entry name" value="P-loop containing nucleoside triphosphate hydrolases"/>
    <property type="match status" value="1"/>
</dbReference>
<organism>
    <name type="scientific">Vibrio vulnificus (strain YJ016)</name>
    <dbReference type="NCBI Taxonomy" id="196600"/>
    <lineage>
        <taxon>Bacteria</taxon>
        <taxon>Pseudomonadati</taxon>
        <taxon>Pseudomonadota</taxon>
        <taxon>Gammaproteobacteria</taxon>
        <taxon>Vibrionales</taxon>
        <taxon>Vibrionaceae</taxon>
        <taxon>Vibrio</taxon>
    </lineage>
</organism>
<name>MIAA_VIBVY</name>